<dbReference type="EMBL" id="CP000115">
    <property type="protein sequence ID" value="ABA04637.1"/>
    <property type="molecule type" value="Genomic_DNA"/>
</dbReference>
<dbReference type="RefSeq" id="WP_011314650.1">
    <property type="nucleotide sequence ID" value="NC_007406.1"/>
</dbReference>
<dbReference type="SMR" id="Q3SSV4"/>
<dbReference type="STRING" id="323098.Nwi_1376"/>
<dbReference type="KEGG" id="nwi:Nwi_1376"/>
<dbReference type="eggNOG" id="COG0094">
    <property type="taxonomic scope" value="Bacteria"/>
</dbReference>
<dbReference type="HOGENOM" id="CLU_061015_2_1_5"/>
<dbReference type="OrthoDB" id="9806626at2"/>
<dbReference type="Proteomes" id="UP000002531">
    <property type="component" value="Chromosome"/>
</dbReference>
<dbReference type="GO" id="GO:1990904">
    <property type="term" value="C:ribonucleoprotein complex"/>
    <property type="evidence" value="ECO:0007669"/>
    <property type="project" value="UniProtKB-KW"/>
</dbReference>
<dbReference type="GO" id="GO:0005840">
    <property type="term" value="C:ribosome"/>
    <property type="evidence" value="ECO:0007669"/>
    <property type="project" value="UniProtKB-KW"/>
</dbReference>
<dbReference type="GO" id="GO:0019843">
    <property type="term" value="F:rRNA binding"/>
    <property type="evidence" value="ECO:0007669"/>
    <property type="project" value="UniProtKB-UniRule"/>
</dbReference>
<dbReference type="GO" id="GO:0003735">
    <property type="term" value="F:structural constituent of ribosome"/>
    <property type="evidence" value="ECO:0007669"/>
    <property type="project" value="InterPro"/>
</dbReference>
<dbReference type="GO" id="GO:0000049">
    <property type="term" value="F:tRNA binding"/>
    <property type="evidence" value="ECO:0007669"/>
    <property type="project" value="UniProtKB-UniRule"/>
</dbReference>
<dbReference type="GO" id="GO:0006412">
    <property type="term" value="P:translation"/>
    <property type="evidence" value="ECO:0007669"/>
    <property type="project" value="UniProtKB-UniRule"/>
</dbReference>
<dbReference type="FunFam" id="3.30.1440.10:FF:000001">
    <property type="entry name" value="50S ribosomal protein L5"/>
    <property type="match status" value="1"/>
</dbReference>
<dbReference type="Gene3D" id="3.30.1440.10">
    <property type="match status" value="1"/>
</dbReference>
<dbReference type="HAMAP" id="MF_01333_B">
    <property type="entry name" value="Ribosomal_uL5_B"/>
    <property type="match status" value="1"/>
</dbReference>
<dbReference type="InterPro" id="IPR002132">
    <property type="entry name" value="Ribosomal_uL5"/>
</dbReference>
<dbReference type="InterPro" id="IPR020930">
    <property type="entry name" value="Ribosomal_uL5_bac-type"/>
</dbReference>
<dbReference type="InterPro" id="IPR031309">
    <property type="entry name" value="Ribosomal_uL5_C"/>
</dbReference>
<dbReference type="InterPro" id="IPR020929">
    <property type="entry name" value="Ribosomal_uL5_CS"/>
</dbReference>
<dbReference type="InterPro" id="IPR022803">
    <property type="entry name" value="Ribosomal_uL5_dom_sf"/>
</dbReference>
<dbReference type="InterPro" id="IPR031310">
    <property type="entry name" value="Ribosomal_uL5_N"/>
</dbReference>
<dbReference type="NCBIfam" id="NF000585">
    <property type="entry name" value="PRK00010.1"/>
    <property type="match status" value="1"/>
</dbReference>
<dbReference type="PANTHER" id="PTHR11994">
    <property type="entry name" value="60S RIBOSOMAL PROTEIN L11-RELATED"/>
    <property type="match status" value="1"/>
</dbReference>
<dbReference type="Pfam" id="PF00281">
    <property type="entry name" value="Ribosomal_L5"/>
    <property type="match status" value="1"/>
</dbReference>
<dbReference type="Pfam" id="PF00673">
    <property type="entry name" value="Ribosomal_L5_C"/>
    <property type="match status" value="1"/>
</dbReference>
<dbReference type="PIRSF" id="PIRSF002161">
    <property type="entry name" value="Ribosomal_L5"/>
    <property type="match status" value="1"/>
</dbReference>
<dbReference type="SUPFAM" id="SSF55282">
    <property type="entry name" value="RL5-like"/>
    <property type="match status" value="1"/>
</dbReference>
<dbReference type="PROSITE" id="PS00358">
    <property type="entry name" value="RIBOSOMAL_L5"/>
    <property type="match status" value="1"/>
</dbReference>
<accession>Q3SSV4</accession>
<reference key="1">
    <citation type="journal article" date="2006" name="Appl. Environ. Microbiol.">
        <title>Genome sequence of the chemolithoautotrophic nitrite-oxidizing bacterium Nitrobacter winogradskyi Nb-255.</title>
        <authorList>
            <person name="Starkenburg S.R."/>
            <person name="Chain P.S.G."/>
            <person name="Sayavedra-Soto L.A."/>
            <person name="Hauser L."/>
            <person name="Land M.L."/>
            <person name="Larimer F.W."/>
            <person name="Malfatti S.A."/>
            <person name="Klotz M.G."/>
            <person name="Bottomley P.J."/>
            <person name="Arp D.J."/>
            <person name="Hickey W.J."/>
        </authorList>
    </citation>
    <scope>NUCLEOTIDE SEQUENCE [LARGE SCALE GENOMIC DNA]</scope>
    <source>
        <strain>ATCC 25391 / DSM 10237 / CIP 104748 / NCIMB 11846 / Nb-255</strain>
    </source>
</reference>
<proteinExistence type="inferred from homology"/>
<keyword id="KW-1185">Reference proteome</keyword>
<keyword id="KW-0687">Ribonucleoprotein</keyword>
<keyword id="KW-0689">Ribosomal protein</keyword>
<keyword id="KW-0694">RNA-binding</keyword>
<keyword id="KW-0699">rRNA-binding</keyword>
<keyword id="KW-0820">tRNA-binding</keyword>
<gene>
    <name evidence="1" type="primary">rplE</name>
    <name type="ordered locus">Nwi_1376</name>
</gene>
<sequence>MAETAYVPRLRAEYDKSIRSRLTEQFGYVNVMQVPRLDKVVLNMGIGEAVNDRKKAEAAAGDLSLIAGQKAVVTYSRVAISTFKLRENQPIGCKVTLRKTKMYEFIDRLVNVALPRVRDFRGLNPKSFDGRGNYSLGIKEHIIFPEIDFDKVGESWGMDVTVCTTAQTDDEARALLTAFNFPFRQ</sequence>
<protein>
    <recommendedName>
        <fullName evidence="1">Large ribosomal subunit protein uL5</fullName>
    </recommendedName>
    <alternativeName>
        <fullName evidence="2">50S ribosomal protein L5</fullName>
    </alternativeName>
</protein>
<comment type="function">
    <text evidence="1">This is one of the proteins that bind and probably mediate the attachment of the 5S RNA into the large ribosomal subunit, where it forms part of the central protuberance. In the 70S ribosome it contacts protein S13 of the 30S subunit (bridge B1b), connecting the 2 subunits; this bridge is implicated in subunit movement. Contacts the P site tRNA; the 5S rRNA and some of its associated proteins might help stabilize positioning of ribosome-bound tRNAs.</text>
</comment>
<comment type="subunit">
    <text evidence="1">Part of the 50S ribosomal subunit; part of the 5S rRNA/L5/L18/L25 subcomplex. Contacts the 5S rRNA and the P site tRNA. Forms a bridge to the 30S subunit in the 70S ribosome.</text>
</comment>
<comment type="similarity">
    <text evidence="1">Belongs to the universal ribosomal protein uL5 family.</text>
</comment>
<evidence type="ECO:0000255" key="1">
    <source>
        <dbReference type="HAMAP-Rule" id="MF_01333"/>
    </source>
</evidence>
<evidence type="ECO:0000305" key="2"/>
<name>RL5_NITWN</name>
<organism>
    <name type="scientific">Nitrobacter winogradskyi (strain ATCC 25391 / DSM 10237 / CIP 104748 / NCIMB 11846 / Nb-255)</name>
    <dbReference type="NCBI Taxonomy" id="323098"/>
    <lineage>
        <taxon>Bacteria</taxon>
        <taxon>Pseudomonadati</taxon>
        <taxon>Pseudomonadota</taxon>
        <taxon>Alphaproteobacteria</taxon>
        <taxon>Hyphomicrobiales</taxon>
        <taxon>Nitrobacteraceae</taxon>
        <taxon>Nitrobacter</taxon>
    </lineage>
</organism>
<feature type="chain" id="PRO_0000243029" description="Large ribosomal subunit protein uL5">
    <location>
        <begin position="1"/>
        <end position="185"/>
    </location>
</feature>